<proteinExistence type="inferred from homology"/>
<name>RF1_METM7</name>
<accession>A6VG76</accession>
<comment type="function">
    <text evidence="1">Directs the termination of nascent peptide synthesis (translation) in response to the termination codons UAA, UAG and UGA.</text>
</comment>
<comment type="subunit">
    <text evidence="1">Heterodimer of two subunits, one of which binds GTP.</text>
</comment>
<comment type="subcellular location">
    <subcellularLocation>
        <location evidence="1">Cytoplasm</location>
    </subcellularLocation>
</comment>
<comment type="similarity">
    <text evidence="1">Belongs to the eukaryotic release factor 1 family.</text>
</comment>
<dbReference type="EMBL" id="CP000745">
    <property type="protein sequence ID" value="ABR65452.1"/>
    <property type="molecule type" value="Genomic_DNA"/>
</dbReference>
<dbReference type="SMR" id="A6VG76"/>
<dbReference type="STRING" id="426368.MmarC7_0383"/>
<dbReference type="KEGG" id="mmz:MmarC7_0383"/>
<dbReference type="eggNOG" id="arCOG01742">
    <property type="taxonomic scope" value="Archaea"/>
</dbReference>
<dbReference type="HOGENOM" id="CLU_035759_3_0_2"/>
<dbReference type="OrthoDB" id="1011at2157"/>
<dbReference type="GO" id="GO:0005737">
    <property type="term" value="C:cytoplasm"/>
    <property type="evidence" value="ECO:0007669"/>
    <property type="project" value="UniProtKB-SubCell"/>
</dbReference>
<dbReference type="GO" id="GO:0016149">
    <property type="term" value="F:translation release factor activity, codon specific"/>
    <property type="evidence" value="ECO:0007669"/>
    <property type="project" value="UniProtKB-UniRule"/>
</dbReference>
<dbReference type="FunFam" id="3.30.1330.30:FF:000032">
    <property type="entry name" value="Eukaryotic peptide chain release factor subunit 1"/>
    <property type="match status" value="1"/>
</dbReference>
<dbReference type="FunFam" id="3.30.420.60:FF:000003">
    <property type="entry name" value="Peptide chain release factor subunit 1"/>
    <property type="match status" value="1"/>
</dbReference>
<dbReference type="FunFam" id="3.30.960.10:FF:000003">
    <property type="entry name" value="Peptide chain release factor subunit 1"/>
    <property type="match status" value="1"/>
</dbReference>
<dbReference type="Gene3D" id="1.20.5.170">
    <property type="match status" value="1"/>
</dbReference>
<dbReference type="Gene3D" id="3.30.1330.30">
    <property type="match status" value="1"/>
</dbReference>
<dbReference type="Gene3D" id="3.30.960.10">
    <property type="entry name" value="eRF1 domain 1"/>
    <property type="match status" value="1"/>
</dbReference>
<dbReference type="Gene3D" id="3.30.420.60">
    <property type="entry name" value="eRF1 domain 2"/>
    <property type="match status" value="1"/>
</dbReference>
<dbReference type="HAMAP" id="MF_00424">
    <property type="entry name" value="Rel_fact_arch_1"/>
    <property type="match status" value="1"/>
</dbReference>
<dbReference type="InterPro" id="IPR042226">
    <property type="entry name" value="eFR1_2_sf"/>
</dbReference>
<dbReference type="InterPro" id="IPR005140">
    <property type="entry name" value="eRF1_1_Pelota"/>
</dbReference>
<dbReference type="InterPro" id="IPR024049">
    <property type="entry name" value="eRF1_1_sf"/>
</dbReference>
<dbReference type="InterPro" id="IPR005141">
    <property type="entry name" value="eRF1_2"/>
</dbReference>
<dbReference type="InterPro" id="IPR005142">
    <property type="entry name" value="eRF1_3"/>
</dbReference>
<dbReference type="InterPro" id="IPR020918">
    <property type="entry name" value="Peptide_chain-rel_aRF1"/>
</dbReference>
<dbReference type="InterPro" id="IPR004403">
    <property type="entry name" value="Peptide_chain-rel_eRF1/aRF1"/>
</dbReference>
<dbReference type="InterPro" id="IPR029064">
    <property type="entry name" value="Ribosomal_eL30-like_sf"/>
</dbReference>
<dbReference type="NCBIfam" id="TIGR03676">
    <property type="entry name" value="aRF1_eRF1"/>
    <property type="match status" value="1"/>
</dbReference>
<dbReference type="PANTHER" id="PTHR10113">
    <property type="entry name" value="PEPTIDE CHAIN RELEASE FACTOR SUBUNIT 1"/>
    <property type="match status" value="1"/>
</dbReference>
<dbReference type="Pfam" id="PF03463">
    <property type="entry name" value="eRF1_1"/>
    <property type="match status" value="1"/>
</dbReference>
<dbReference type="Pfam" id="PF03464">
    <property type="entry name" value="eRF1_2"/>
    <property type="match status" value="1"/>
</dbReference>
<dbReference type="Pfam" id="PF03465">
    <property type="entry name" value="eRF1_3"/>
    <property type="match status" value="1"/>
</dbReference>
<dbReference type="SMART" id="SM01194">
    <property type="entry name" value="eRF1_1"/>
    <property type="match status" value="1"/>
</dbReference>
<dbReference type="SUPFAM" id="SSF55315">
    <property type="entry name" value="L30e-like"/>
    <property type="match status" value="1"/>
</dbReference>
<dbReference type="SUPFAM" id="SSF55481">
    <property type="entry name" value="N-terminal domain of eukaryotic peptide chain release factor subunit 1, ERF1"/>
    <property type="match status" value="1"/>
</dbReference>
<dbReference type="SUPFAM" id="SSF53137">
    <property type="entry name" value="Translational machinery components"/>
    <property type="match status" value="1"/>
</dbReference>
<evidence type="ECO:0000255" key="1">
    <source>
        <dbReference type="HAMAP-Rule" id="MF_00424"/>
    </source>
</evidence>
<reference key="1">
    <citation type="submission" date="2007-06" db="EMBL/GenBank/DDBJ databases">
        <title>Complete sequence of Methanococcus maripaludis C7.</title>
        <authorList>
            <consortium name="US DOE Joint Genome Institute"/>
            <person name="Copeland A."/>
            <person name="Lucas S."/>
            <person name="Lapidus A."/>
            <person name="Barry K."/>
            <person name="Glavina del Rio T."/>
            <person name="Dalin E."/>
            <person name="Tice H."/>
            <person name="Pitluck S."/>
            <person name="Clum A."/>
            <person name="Schmutz J."/>
            <person name="Larimer F."/>
            <person name="Land M."/>
            <person name="Hauser L."/>
            <person name="Kyrpides N."/>
            <person name="Anderson I."/>
            <person name="Sieprawska-Lupa M."/>
            <person name="Whitman W.B."/>
            <person name="Richardson P."/>
        </authorList>
    </citation>
    <scope>NUCLEOTIDE SEQUENCE [LARGE SCALE GENOMIC DNA]</scope>
    <source>
        <strain>C7 / ATCC BAA-1331</strain>
    </source>
</reference>
<gene>
    <name evidence="1" type="primary">prf1</name>
    <name type="ordered locus">MmarC7_0383</name>
</gene>
<sequence>MSGNSSTDMYLFKKSLRELKGKKGKGTELISVYVPAGRRLSDISQYLRQELSQSSNIKSKTTMKNVQSAIEVILQRLKLLKEPLEMGVIIFAGMIPRGGPGTEKMEVYVLEPPEPVKTFVYRCDSLFYTDPLEDFIQDTEVYGVILVDRNEATIGTVKGKTITVLKKLTSGVPGKFKAGGQSARRLERLIDDAAHQFMVRIGEYATESFMPILEEKKLKGLLLGGPGNTKNEFAEKDYLHHELKKKIIDTFDLCYTEEFGIRELLEKASDLLRDLDLMKEKNLIQRFFKELIKDDGGLSAYGEAQVMKYLGMGAIDTLIVTEDIGITRVTVKCNNCDYTQEVNVKTNEMFKFEDQLKTKACPTCGGAMYIDEEKDIIEYLSELCNVHNTDIIVVSTDTEEGSQISRAFKGMAAILRYKL</sequence>
<protein>
    <recommendedName>
        <fullName evidence="1">Peptide chain release factor subunit 1</fullName>
    </recommendedName>
    <alternativeName>
        <fullName evidence="1">Translation termination factor aRF1</fullName>
    </alternativeName>
</protein>
<organism>
    <name type="scientific">Methanococcus maripaludis (strain C7 / ATCC BAA-1331)</name>
    <dbReference type="NCBI Taxonomy" id="426368"/>
    <lineage>
        <taxon>Archaea</taxon>
        <taxon>Methanobacteriati</taxon>
        <taxon>Methanobacteriota</taxon>
        <taxon>Methanomada group</taxon>
        <taxon>Methanococci</taxon>
        <taxon>Methanococcales</taxon>
        <taxon>Methanococcaceae</taxon>
        <taxon>Methanococcus</taxon>
    </lineage>
</organism>
<keyword id="KW-0963">Cytoplasm</keyword>
<keyword id="KW-0648">Protein biosynthesis</keyword>
<feature type="chain" id="PRO_1000060105" description="Peptide chain release factor subunit 1">
    <location>
        <begin position="1"/>
        <end position="419"/>
    </location>
</feature>